<organism>
    <name type="scientific">Pyrococcus horikoshii (strain ATCC 700860 / DSM 12428 / JCM 9974 / NBRC 100139 / OT-3)</name>
    <dbReference type="NCBI Taxonomy" id="70601"/>
    <lineage>
        <taxon>Archaea</taxon>
        <taxon>Methanobacteriati</taxon>
        <taxon>Methanobacteriota</taxon>
        <taxon>Thermococci</taxon>
        <taxon>Thermococcales</taxon>
        <taxon>Thermococcaceae</taxon>
        <taxon>Pyrococcus</taxon>
    </lineage>
</organism>
<comment type="function">
    <text evidence="1">Catalyzes the synthesis of GMP from XMP.</text>
</comment>
<comment type="catalytic activity">
    <reaction>
        <text>XMP + L-glutamine + ATP + H2O = GMP + L-glutamate + AMP + diphosphate + 2 H(+)</text>
        <dbReference type="Rhea" id="RHEA:11680"/>
        <dbReference type="ChEBI" id="CHEBI:15377"/>
        <dbReference type="ChEBI" id="CHEBI:15378"/>
        <dbReference type="ChEBI" id="CHEBI:29985"/>
        <dbReference type="ChEBI" id="CHEBI:30616"/>
        <dbReference type="ChEBI" id="CHEBI:33019"/>
        <dbReference type="ChEBI" id="CHEBI:57464"/>
        <dbReference type="ChEBI" id="CHEBI:58115"/>
        <dbReference type="ChEBI" id="CHEBI:58359"/>
        <dbReference type="ChEBI" id="CHEBI:456215"/>
        <dbReference type="EC" id="6.3.5.2"/>
    </reaction>
</comment>
<comment type="pathway">
    <text>Purine metabolism; GMP biosynthesis; GMP from XMP (L-Gln route): step 1/1.</text>
</comment>
<comment type="subunit">
    <text evidence="2">Heterodimer composed of a glutamine amidotransferase subunit (A) and a GMP-binding subunit (B).</text>
</comment>
<accession>O59072</accession>
<protein>
    <recommendedName>
        <fullName>GMP synthase [glutamine-hydrolyzing] subunit B</fullName>
        <ecNumber>6.3.5.2</ecNumber>
    </recommendedName>
    <alternativeName>
        <fullName>GMP synthetase</fullName>
    </alternativeName>
</protein>
<name>GUAAB_PYRHO</name>
<sequence length="308" mass="34562">MDWGRFVEEKVREIRETVGDSKAIIALSGGVDSSTAAVLAHKAIGDRLHAVFVNTGFLRKGEPEFVVKTFRDEFGMNLHYVDAQDRFFSALKGVTDPEEKRKIIGRVFIEVFEEVAKKIGAEYLIQGTIAPDWIESQGKIKSHHNVGGLPEKLNLKLIEPLRDLYKDEVRELAKFLGLPEKIYNRMPFPGPGLAVRVIGEVTPEKIRIVREANAIVEEEVERAGLRPWQAFAVLLGVKTVGVQGDIRAYKETIAVRIVESIDGMTANAMNVPWEVLQRIAFRITSEIPEVGRVLYDITNKPPATIEFE</sequence>
<evidence type="ECO:0000250" key="1"/>
<evidence type="ECO:0000305" key="2"/>
<evidence type="ECO:0007829" key="3">
    <source>
        <dbReference type="PDB" id="2DPL"/>
    </source>
</evidence>
<proteinExistence type="evidence at protein level"/>
<dbReference type="EC" id="6.3.5.2"/>
<dbReference type="EMBL" id="BA000001">
    <property type="protein sequence ID" value="BAA30453.1"/>
    <property type="molecule type" value="Genomic_DNA"/>
</dbReference>
<dbReference type="PIR" id="E71006">
    <property type="entry name" value="E71006"/>
</dbReference>
<dbReference type="RefSeq" id="WP_010885436.1">
    <property type="nucleotide sequence ID" value="NC_000961.1"/>
</dbReference>
<dbReference type="PDB" id="2DPL">
    <property type="method" value="X-ray"/>
    <property type="resolution" value="1.43 A"/>
    <property type="chains" value="A/B=1-308"/>
</dbReference>
<dbReference type="PDB" id="3A4I">
    <property type="method" value="X-ray"/>
    <property type="resolution" value="1.79 A"/>
    <property type="chains" value="A/B=1-308"/>
</dbReference>
<dbReference type="PDBsum" id="2DPL"/>
<dbReference type="PDBsum" id="3A4I"/>
<dbReference type="SMR" id="O59072"/>
<dbReference type="STRING" id="70601.gene:9378323"/>
<dbReference type="EnsemblBacteria" id="BAA30453">
    <property type="protein sequence ID" value="BAA30453"/>
    <property type="gene ID" value="BAA30453"/>
</dbReference>
<dbReference type="GeneID" id="1443673"/>
<dbReference type="KEGG" id="pho:PH1347"/>
<dbReference type="eggNOG" id="arCOG00085">
    <property type="taxonomic scope" value="Archaea"/>
</dbReference>
<dbReference type="OrthoDB" id="33844at2157"/>
<dbReference type="BRENDA" id="6.3.5.2">
    <property type="organism ID" value="5244"/>
</dbReference>
<dbReference type="UniPathway" id="UPA00189">
    <property type="reaction ID" value="UER00296"/>
</dbReference>
<dbReference type="EvolutionaryTrace" id="O59072"/>
<dbReference type="Proteomes" id="UP000000752">
    <property type="component" value="Chromosome"/>
</dbReference>
<dbReference type="GO" id="GO:0005829">
    <property type="term" value="C:cytosol"/>
    <property type="evidence" value="ECO:0007669"/>
    <property type="project" value="TreeGrafter"/>
</dbReference>
<dbReference type="GO" id="GO:0005524">
    <property type="term" value="F:ATP binding"/>
    <property type="evidence" value="ECO:0007669"/>
    <property type="project" value="UniProtKB-UniRule"/>
</dbReference>
<dbReference type="GO" id="GO:0003921">
    <property type="term" value="F:GMP synthase activity"/>
    <property type="evidence" value="ECO:0007669"/>
    <property type="project" value="InterPro"/>
</dbReference>
<dbReference type="CDD" id="cd01997">
    <property type="entry name" value="GMP_synthase_C"/>
    <property type="match status" value="1"/>
</dbReference>
<dbReference type="FunFam" id="3.30.300.10:FF:000002">
    <property type="entry name" value="GMP synthase [glutamine-hydrolyzing]"/>
    <property type="match status" value="1"/>
</dbReference>
<dbReference type="FunFam" id="3.40.50.620:FF:000208">
    <property type="entry name" value="GMP synthase [glutamine-hydrolyzing] subunit B"/>
    <property type="match status" value="1"/>
</dbReference>
<dbReference type="Gene3D" id="3.30.300.10">
    <property type="match status" value="1"/>
</dbReference>
<dbReference type="Gene3D" id="3.40.50.620">
    <property type="entry name" value="HUPs"/>
    <property type="match status" value="1"/>
</dbReference>
<dbReference type="HAMAP" id="MF_00345">
    <property type="entry name" value="GMP_synthase_B"/>
    <property type="match status" value="1"/>
</dbReference>
<dbReference type="InterPro" id="IPR001674">
    <property type="entry name" value="GMP_synth_C"/>
</dbReference>
<dbReference type="InterPro" id="IPR026598">
    <property type="entry name" value="GMP_synthase_B"/>
</dbReference>
<dbReference type="InterPro" id="IPR025777">
    <property type="entry name" value="GMPS_ATP_PPase_dom"/>
</dbReference>
<dbReference type="InterPro" id="IPR022310">
    <property type="entry name" value="NAD/GMP_synthase"/>
</dbReference>
<dbReference type="InterPro" id="IPR014729">
    <property type="entry name" value="Rossmann-like_a/b/a_fold"/>
</dbReference>
<dbReference type="NCBIfam" id="TIGR00884">
    <property type="entry name" value="guaA_Cterm"/>
    <property type="match status" value="1"/>
</dbReference>
<dbReference type="NCBIfam" id="NF000848">
    <property type="entry name" value="PRK00074.1"/>
    <property type="match status" value="1"/>
</dbReference>
<dbReference type="PANTHER" id="PTHR11922:SF2">
    <property type="entry name" value="GMP SYNTHASE [GLUTAMINE-HYDROLYZING]"/>
    <property type="match status" value="1"/>
</dbReference>
<dbReference type="PANTHER" id="PTHR11922">
    <property type="entry name" value="GMP SYNTHASE-RELATED"/>
    <property type="match status" value="1"/>
</dbReference>
<dbReference type="Pfam" id="PF00958">
    <property type="entry name" value="GMP_synt_C"/>
    <property type="match status" value="1"/>
</dbReference>
<dbReference type="Pfam" id="PF02540">
    <property type="entry name" value="NAD_synthase"/>
    <property type="match status" value="1"/>
</dbReference>
<dbReference type="SUPFAM" id="SSF52402">
    <property type="entry name" value="Adenine nucleotide alpha hydrolases-like"/>
    <property type="match status" value="1"/>
</dbReference>
<dbReference type="SUPFAM" id="SSF54810">
    <property type="entry name" value="GMP synthetase C-terminal dimerisation domain"/>
    <property type="match status" value="1"/>
</dbReference>
<dbReference type="PROSITE" id="PS51553">
    <property type="entry name" value="GMPS_ATP_PPASE"/>
    <property type="match status" value="1"/>
</dbReference>
<gene>
    <name type="primary">guaAB</name>
    <name type="ordered locus">PH1347</name>
</gene>
<keyword id="KW-0002">3D-structure</keyword>
<keyword id="KW-0067">ATP-binding</keyword>
<keyword id="KW-0332">GMP biosynthesis</keyword>
<keyword id="KW-0436">Ligase</keyword>
<keyword id="KW-0547">Nucleotide-binding</keyword>
<keyword id="KW-0658">Purine biosynthesis</keyword>
<feature type="chain" id="PRO_0000140249" description="GMP synthase [glutamine-hydrolyzing] subunit B">
    <location>
        <begin position="1"/>
        <end position="308"/>
    </location>
</feature>
<feature type="domain" description="GMPS ATP-PPase">
    <location>
        <begin position="1"/>
        <end position="185"/>
    </location>
</feature>
<feature type="binding site" evidence="1">
    <location>
        <begin position="28"/>
        <end position="34"/>
    </location>
    <ligand>
        <name>ATP</name>
        <dbReference type="ChEBI" id="CHEBI:30616"/>
    </ligand>
</feature>
<feature type="helix" evidence="3">
    <location>
        <begin position="3"/>
        <end position="18"/>
    </location>
</feature>
<feature type="strand" evidence="3">
    <location>
        <begin position="23"/>
        <end position="26"/>
    </location>
</feature>
<feature type="helix" evidence="3">
    <location>
        <begin position="31"/>
        <end position="44"/>
    </location>
</feature>
<feature type="helix" evidence="3">
    <location>
        <begin position="45"/>
        <end position="47"/>
    </location>
</feature>
<feature type="strand" evidence="3">
    <location>
        <begin position="48"/>
        <end position="54"/>
    </location>
</feature>
<feature type="helix" evidence="3">
    <location>
        <begin position="62"/>
        <end position="70"/>
    </location>
</feature>
<feature type="turn" evidence="3">
    <location>
        <begin position="71"/>
        <end position="74"/>
    </location>
</feature>
<feature type="strand" evidence="3">
    <location>
        <begin position="77"/>
        <end position="82"/>
    </location>
</feature>
<feature type="helix" evidence="3">
    <location>
        <begin position="84"/>
        <end position="90"/>
    </location>
</feature>
<feature type="turn" evidence="3">
    <location>
        <begin position="91"/>
        <end position="93"/>
    </location>
</feature>
<feature type="helix" evidence="3">
    <location>
        <begin position="97"/>
        <end position="119"/>
    </location>
</feature>
<feature type="strand" evidence="3">
    <location>
        <begin position="122"/>
        <end position="125"/>
    </location>
</feature>
<feature type="strand" evidence="3">
    <location>
        <begin position="156"/>
        <end position="158"/>
    </location>
</feature>
<feature type="turn" evidence="3">
    <location>
        <begin position="160"/>
        <end position="163"/>
    </location>
</feature>
<feature type="helix" evidence="3">
    <location>
        <begin position="166"/>
        <end position="175"/>
    </location>
</feature>
<feature type="helix" evidence="3">
    <location>
        <begin position="180"/>
        <end position="183"/>
    </location>
</feature>
<feature type="helix" evidence="3">
    <location>
        <begin position="192"/>
        <end position="196"/>
    </location>
</feature>
<feature type="strand" evidence="3">
    <location>
        <begin position="197"/>
        <end position="200"/>
    </location>
</feature>
<feature type="helix" evidence="3">
    <location>
        <begin position="203"/>
        <end position="222"/>
    </location>
</feature>
<feature type="strand" evidence="3">
    <location>
        <begin position="228"/>
        <end position="234"/>
    </location>
</feature>
<feature type="strand" evidence="3">
    <location>
        <begin position="239"/>
        <end position="259"/>
    </location>
</feature>
<feature type="strand" evidence="3">
    <location>
        <begin position="261"/>
        <end position="268"/>
    </location>
</feature>
<feature type="helix" evidence="3">
    <location>
        <begin position="273"/>
        <end position="286"/>
    </location>
</feature>
<feature type="strand" evidence="3">
    <location>
        <begin position="290"/>
        <end position="296"/>
    </location>
</feature>
<reference key="1">
    <citation type="journal article" date="1998" name="DNA Res.">
        <title>Complete sequence and gene organization of the genome of a hyper-thermophilic archaebacterium, Pyrococcus horikoshii OT3.</title>
        <authorList>
            <person name="Kawarabayasi Y."/>
            <person name="Sawada M."/>
            <person name="Horikawa H."/>
            <person name="Haikawa Y."/>
            <person name="Hino Y."/>
            <person name="Yamamoto S."/>
            <person name="Sekine M."/>
            <person name="Baba S."/>
            <person name="Kosugi H."/>
            <person name="Hosoyama A."/>
            <person name="Nagai Y."/>
            <person name="Sakai M."/>
            <person name="Ogura K."/>
            <person name="Otsuka R."/>
            <person name="Nakazawa H."/>
            <person name="Takamiya M."/>
            <person name="Ohfuku Y."/>
            <person name="Funahashi T."/>
            <person name="Tanaka T."/>
            <person name="Kudoh Y."/>
            <person name="Yamazaki J."/>
            <person name="Kushida N."/>
            <person name="Oguchi A."/>
            <person name="Aoki K."/>
            <person name="Yoshizawa T."/>
            <person name="Nakamura Y."/>
            <person name="Robb F.T."/>
            <person name="Horikoshi K."/>
            <person name="Masuchi Y."/>
            <person name="Shizuya H."/>
            <person name="Kikuchi H."/>
        </authorList>
    </citation>
    <scope>NUCLEOTIDE SEQUENCE [LARGE SCALE GENOMIC DNA]</scope>
    <source>
        <strain>ATCC 700860 / DSM 12428 / JCM 9974 / NBRC 100139 / OT-3</strain>
    </source>
</reference>
<reference key="2">
    <citation type="submission" date="2006-11" db="PDB data bank">
        <title>Crystal structure of the GMP synthase from Pyrococcus horikoshii OT3.</title>
        <authorList>
            <consortium name="RIKEN structural genomics initiative (RSGI)"/>
        </authorList>
    </citation>
    <scope>X-RAY CRYSTALLOGRAPHY (1.43 ANGSTROMS)</scope>
</reference>